<protein>
    <recommendedName>
        <fullName>Ribosome biogenesis protein SLX9</fullName>
    </recommendedName>
</protein>
<name>SLX9_YEAST</name>
<proteinExistence type="evidence at protein level"/>
<organism>
    <name type="scientific">Saccharomyces cerevisiae (strain ATCC 204508 / S288c)</name>
    <name type="common">Baker's yeast</name>
    <dbReference type="NCBI Taxonomy" id="559292"/>
    <lineage>
        <taxon>Eukaryota</taxon>
        <taxon>Fungi</taxon>
        <taxon>Dikarya</taxon>
        <taxon>Ascomycota</taxon>
        <taxon>Saccharomycotina</taxon>
        <taxon>Saccharomycetes</taxon>
        <taxon>Saccharomycetales</taxon>
        <taxon>Saccharomycetaceae</taxon>
        <taxon>Saccharomyces</taxon>
    </lineage>
</organism>
<gene>
    <name type="primary">SLX9</name>
    <name type="ordered locus">YGR081C</name>
</gene>
<dbReference type="EMBL" id="Z72866">
    <property type="protein sequence ID" value="CAA97083.1"/>
    <property type="molecule type" value="Genomic_DNA"/>
</dbReference>
<dbReference type="EMBL" id="BK006941">
    <property type="protein sequence ID" value="DAA08174.1"/>
    <property type="molecule type" value="Genomic_DNA"/>
</dbReference>
<dbReference type="PIR" id="S64376">
    <property type="entry name" value="S64376"/>
</dbReference>
<dbReference type="RefSeq" id="NP_011595.3">
    <property type="nucleotide sequence ID" value="NM_001181210.3"/>
</dbReference>
<dbReference type="SMR" id="P53251"/>
<dbReference type="BioGRID" id="33323">
    <property type="interactions" value="454"/>
</dbReference>
<dbReference type="DIP" id="DIP-4723N"/>
<dbReference type="FunCoup" id="P53251">
    <property type="interactions" value="309"/>
</dbReference>
<dbReference type="IntAct" id="P53251">
    <property type="interactions" value="54"/>
</dbReference>
<dbReference type="MINT" id="P53251"/>
<dbReference type="STRING" id="4932.YGR081C"/>
<dbReference type="CarbonylDB" id="P53251"/>
<dbReference type="iPTMnet" id="P53251"/>
<dbReference type="PaxDb" id="4932-YGR081C"/>
<dbReference type="PeptideAtlas" id="P53251"/>
<dbReference type="EnsemblFungi" id="YGR081C_mRNA">
    <property type="protein sequence ID" value="YGR081C"/>
    <property type="gene ID" value="YGR081C"/>
</dbReference>
<dbReference type="GeneID" id="852972"/>
<dbReference type="KEGG" id="sce:YGR081C"/>
<dbReference type="AGR" id="SGD:S000003313"/>
<dbReference type="SGD" id="S000003313">
    <property type="gene designation" value="SLX9"/>
</dbReference>
<dbReference type="VEuPathDB" id="FungiDB:YGR081C"/>
<dbReference type="eggNOG" id="ENOG502S2IS">
    <property type="taxonomic scope" value="Eukaryota"/>
</dbReference>
<dbReference type="HOGENOM" id="CLU_1372424_0_0_1"/>
<dbReference type="InParanoid" id="P53251"/>
<dbReference type="OMA" id="PKAYLHQ"/>
<dbReference type="OrthoDB" id="4068648at2759"/>
<dbReference type="BioCyc" id="YEAST:G3O-30793-MONOMER"/>
<dbReference type="BioGRID-ORCS" id="852972">
    <property type="hits" value="0 hits in 10 CRISPR screens"/>
</dbReference>
<dbReference type="PRO" id="PR:P53251"/>
<dbReference type="Proteomes" id="UP000002311">
    <property type="component" value="Chromosome VII"/>
</dbReference>
<dbReference type="RNAct" id="P53251">
    <property type="molecule type" value="protein"/>
</dbReference>
<dbReference type="GO" id="GO:0030686">
    <property type="term" value="C:90S preribosome"/>
    <property type="evidence" value="ECO:0000314"/>
    <property type="project" value="SGD"/>
</dbReference>
<dbReference type="GO" id="GO:0005730">
    <property type="term" value="C:nucleolus"/>
    <property type="evidence" value="ECO:0000314"/>
    <property type="project" value="ComplexPortal"/>
</dbReference>
<dbReference type="GO" id="GO:0005634">
    <property type="term" value="C:nucleus"/>
    <property type="evidence" value="ECO:0007005"/>
    <property type="project" value="SGD"/>
</dbReference>
<dbReference type="GO" id="GO:0030688">
    <property type="term" value="C:preribosome, small subunit precursor"/>
    <property type="evidence" value="ECO:0000314"/>
    <property type="project" value="SGD"/>
</dbReference>
<dbReference type="GO" id="GO:0032040">
    <property type="term" value="C:small-subunit processome"/>
    <property type="evidence" value="ECO:0000353"/>
    <property type="project" value="ComplexPortal"/>
</dbReference>
<dbReference type="GO" id="GO:0051880">
    <property type="term" value="F:G-quadruplex DNA binding"/>
    <property type="evidence" value="ECO:0000314"/>
    <property type="project" value="SGD"/>
</dbReference>
<dbReference type="GO" id="GO:0030490">
    <property type="term" value="P:maturation of SSU-rRNA"/>
    <property type="evidence" value="ECO:0000303"/>
    <property type="project" value="ComplexPortal"/>
</dbReference>
<dbReference type="GO" id="GO:0000462">
    <property type="term" value="P:maturation of SSU-rRNA from tricistronic rRNA transcript (SSU-rRNA, 5.8S rRNA, LSU-rRNA)"/>
    <property type="evidence" value="ECO:0000315"/>
    <property type="project" value="SGD"/>
</dbReference>
<dbReference type="GO" id="GO:0000056">
    <property type="term" value="P:ribosomal small subunit export from nucleus"/>
    <property type="evidence" value="ECO:0000315"/>
    <property type="project" value="SGD"/>
</dbReference>
<dbReference type="InterPro" id="IPR028160">
    <property type="entry name" value="Slx9-like"/>
</dbReference>
<dbReference type="Pfam" id="PF15341">
    <property type="entry name" value="SLX9"/>
    <property type="match status" value="1"/>
</dbReference>
<comment type="function">
    <text evidence="4 6">Involved in ribosome biogenesis. Required for normal pre-rRNA processing in internal transcribed spacer 1 (ITS1). May be involved in the movements of the replication forks.</text>
</comment>
<comment type="subunit">
    <text evidence="6">Interacts with the 35S, 23S and 20S pre-rRNAs and with the U3 snoRNA.</text>
</comment>
<comment type="interaction">
    <interactant intactId="EBI-23221">
        <id>P53251</id>
    </interactant>
    <interactant intactId="EBI-6482">
        <id>P38333</id>
        <label>ENP1</label>
    </interactant>
    <organismsDiffer>false</organismsDiffer>
    <experiments>4</experiments>
</comment>
<comment type="subcellular location">
    <subcellularLocation>
        <location evidence="2">Nucleus</location>
        <location evidence="2">Nucleolus</location>
    </subcellularLocation>
</comment>
<comment type="induction">
    <text evidence="5">Transiently up-regulated during the initial 15 minutes of dough-fermentation.</text>
</comment>
<comment type="miscellaneous">
    <text evidence="3">Present with 3670 molecules/cell in log phase SD medium.</text>
</comment>
<comment type="similarity">
    <text evidence="7">Belongs to the SLX9 family.</text>
</comment>
<accession>P53251</accession>
<reference key="1">
    <citation type="journal article" date="1997" name="Nature">
        <title>The nucleotide sequence of Saccharomyces cerevisiae chromosome VII.</title>
        <authorList>
            <person name="Tettelin H."/>
            <person name="Agostoni-Carbone M.L."/>
            <person name="Albermann K."/>
            <person name="Albers M."/>
            <person name="Arroyo J."/>
            <person name="Backes U."/>
            <person name="Barreiros T."/>
            <person name="Bertani I."/>
            <person name="Bjourson A.J."/>
            <person name="Brueckner M."/>
            <person name="Bruschi C.V."/>
            <person name="Carignani G."/>
            <person name="Castagnoli L."/>
            <person name="Cerdan E."/>
            <person name="Clemente M.L."/>
            <person name="Coblenz A."/>
            <person name="Coglievina M."/>
            <person name="Coissac E."/>
            <person name="Defoor E."/>
            <person name="Del Bino S."/>
            <person name="Delius H."/>
            <person name="Delneri D."/>
            <person name="de Wergifosse P."/>
            <person name="Dujon B."/>
            <person name="Durand P."/>
            <person name="Entian K.-D."/>
            <person name="Eraso P."/>
            <person name="Escribano V."/>
            <person name="Fabiani L."/>
            <person name="Fartmann B."/>
            <person name="Feroli F."/>
            <person name="Feuermann M."/>
            <person name="Frontali L."/>
            <person name="Garcia-Gonzalez M."/>
            <person name="Garcia-Saez M.I."/>
            <person name="Goffeau A."/>
            <person name="Guerreiro P."/>
            <person name="Hani J."/>
            <person name="Hansen M."/>
            <person name="Hebling U."/>
            <person name="Hernandez K."/>
            <person name="Heumann K."/>
            <person name="Hilger F."/>
            <person name="Hofmann B."/>
            <person name="Indge K.J."/>
            <person name="James C.M."/>
            <person name="Klima R."/>
            <person name="Koetter P."/>
            <person name="Kramer B."/>
            <person name="Kramer W."/>
            <person name="Lauquin G."/>
            <person name="Leuther H."/>
            <person name="Louis E.J."/>
            <person name="Maillier E."/>
            <person name="Marconi A."/>
            <person name="Martegani E."/>
            <person name="Mazon M.J."/>
            <person name="Mazzoni C."/>
            <person name="McReynolds A.D.K."/>
            <person name="Melchioretto P."/>
            <person name="Mewes H.-W."/>
            <person name="Minenkova O."/>
            <person name="Mueller-Auer S."/>
            <person name="Nawrocki A."/>
            <person name="Netter P."/>
            <person name="Neu R."/>
            <person name="Nombela C."/>
            <person name="Oliver S.G."/>
            <person name="Panzeri L."/>
            <person name="Paoluzi S."/>
            <person name="Plevani P."/>
            <person name="Portetelle D."/>
            <person name="Portillo F."/>
            <person name="Potier S."/>
            <person name="Purnelle B."/>
            <person name="Rieger M."/>
            <person name="Riles L."/>
            <person name="Rinaldi T."/>
            <person name="Robben J."/>
            <person name="Rodrigues-Pousada C."/>
            <person name="Rodriguez-Belmonte E."/>
            <person name="Rodriguez-Torres A.M."/>
            <person name="Rose M."/>
            <person name="Ruzzi M."/>
            <person name="Saliola M."/>
            <person name="Sanchez-Perez M."/>
            <person name="Schaefer B."/>
            <person name="Schaefer M."/>
            <person name="Scharfe M."/>
            <person name="Schmidheini T."/>
            <person name="Schreer A."/>
            <person name="Skala J."/>
            <person name="Souciet J.-L."/>
            <person name="Steensma H.Y."/>
            <person name="Talla E."/>
            <person name="Thierry A."/>
            <person name="Vandenbol M."/>
            <person name="van der Aart Q.J.M."/>
            <person name="Van Dyck L."/>
            <person name="Vanoni M."/>
            <person name="Verhasselt P."/>
            <person name="Voet M."/>
            <person name="Volckaert G."/>
            <person name="Wambutt R."/>
            <person name="Watson M.D."/>
            <person name="Weber N."/>
            <person name="Wedler E."/>
            <person name="Wedler H."/>
            <person name="Wipfli P."/>
            <person name="Wolf K."/>
            <person name="Wright L.F."/>
            <person name="Zaccaria P."/>
            <person name="Zimmermann M."/>
            <person name="Zollner A."/>
            <person name="Kleine K."/>
        </authorList>
    </citation>
    <scope>NUCLEOTIDE SEQUENCE [LARGE SCALE GENOMIC DNA]</scope>
    <source>
        <strain>ATCC 204508 / S288c</strain>
    </source>
</reference>
<reference key="2">
    <citation type="journal article" date="2014" name="G3 (Bethesda)">
        <title>The reference genome sequence of Saccharomyces cerevisiae: Then and now.</title>
        <authorList>
            <person name="Engel S.R."/>
            <person name="Dietrich F.S."/>
            <person name="Fisk D.G."/>
            <person name="Binkley G."/>
            <person name="Balakrishnan R."/>
            <person name="Costanzo M.C."/>
            <person name="Dwight S.S."/>
            <person name="Hitz B.C."/>
            <person name="Karra K."/>
            <person name="Nash R.S."/>
            <person name="Weng S."/>
            <person name="Wong E.D."/>
            <person name="Lloyd P."/>
            <person name="Skrzypek M.S."/>
            <person name="Miyasato S.R."/>
            <person name="Simison M."/>
            <person name="Cherry J.M."/>
        </authorList>
    </citation>
    <scope>GENOME REANNOTATION</scope>
    <source>
        <strain>ATCC 204508 / S288c</strain>
    </source>
</reference>
<reference key="3">
    <citation type="journal article" date="2003" name="Nature">
        <title>Global analysis of protein localization in budding yeast.</title>
        <authorList>
            <person name="Huh W.-K."/>
            <person name="Falvo J.V."/>
            <person name="Gerke L.C."/>
            <person name="Carroll A.S."/>
            <person name="Howson R.W."/>
            <person name="Weissman J.S."/>
            <person name="O'Shea E.K."/>
        </authorList>
    </citation>
    <scope>SUBCELLULAR LOCATION [LARGE SCALE ANALYSIS]</scope>
</reference>
<reference key="4">
    <citation type="journal article" date="2003" name="Nature">
        <title>Global analysis of protein expression in yeast.</title>
        <authorList>
            <person name="Ghaemmaghami S."/>
            <person name="Huh W.-K."/>
            <person name="Bower K."/>
            <person name="Howson R.W."/>
            <person name="Belle A."/>
            <person name="Dephoure N."/>
            <person name="O'Shea E.K."/>
            <person name="Weissman J.S."/>
        </authorList>
    </citation>
    <scope>LEVEL OF PROTEIN EXPRESSION [LARGE SCALE ANALYSIS]</scope>
</reference>
<reference key="5">
    <citation type="journal article" date="2003" name="Nat. Genet.">
        <title>DNA helicase gene interaction network defined using synthetic lethality analyzed by microarray.</title>
        <authorList>
            <person name="Ooi S.L."/>
            <person name="Shoemaker D.D."/>
            <person name="Boeke J.D."/>
        </authorList>
    </citation>
    <scope>FUNCTION</scope>
</reference>
<reference key="6">
    <citation type="journal article" date="2006" name="Food Microbiol.">
        <title>Functional genomic analysis of commercial baker's yeast during initial stages of model dough-fermentation.</title>
        <authorList>
            <person name="Tanaka F."/>
            <person name="Ando A."/>
            <person name="Nakamura T."/>
            <person name="Takagi H."/>
            <person name="Shima J."/>
        </authorList>
    </citation>
    <scope>INDUCTION</scope>
</reference>
<reference key="7">
    <citation type="journal article" date="2006" name="RNA">
        <title>Slx9p facilitates efficient ITS1 processing of pre-rRNA in Saccharomyces cerevisiae.</title>
        <authorList>
            <person name="Bax R."/>
            <person name="Raue H.A."/>
            <person name="Vos J.C."/>
        </authorList>
    </citation>
    <scope>FUNCTION</scope>
    <scope>INTERACTION WITH 35S PRE-RRNA; 23S PRE-RRNA; 20S PRE-RRNA AND U3 SNORNA</scope>
</reference>
<reference key="8">
    <citation type="journal article" date="2008" name="Mol. Cell. Proteomics">
        <title>A multidimensional chromatography technology for in-depth phosphoproteome analysis.</title>
        <authorList>
            <person name="Albuquerque C.P."/>
            <person name="Smolka M.B."/>
            <person name="Payne S.H."/>
            <person name="Bafna V."/>
            <person name="Eng J."/>
            <person name="Zhou H."/>
        </authorList>
    </citation>
    <scope>IDENTIFICATION BY MASS SPECTROMETRY [LARGE SCALE ANALYSIS]</scope>
</reference>
<feature type="chain" id="PRO_0000202808" description="Ribosome biogenesis protein SLX9">
    <location>
        <begin position="1"/>
        <end position="210"/>
    </location>
</feature>
<feature type="region of interest" description="Disordered" evidence="1">
    <location>
        <begin position="1"/>
        <end position="27"/>
    </location>
</feature>
<feature type="compositionally biased region" description="Polar residues" evidence="1">
    <location>
        <begin position="10"/>
        <end position="21"/>
    </location>
</feature>
<keyword id="KW-0539">Nucleus</keyword>
<keyword id="KW-1185">Reference proteome</keyword>
<keyword id="KW-0690">Ribosome biogenesis</keyword>
<keyword id="KW-0698">rRNA processing</keyword>
<evidence type="ECO:0000256" key="1">
    <source>
        <dbReference type="SAM" id="MobiDB-lite"/>
    </source>
</evidence>
<evidence type="ECO:0000269" key="2">
    <source>
    </source>
</evidence>
<evidence type="ECO:0000269" key="3">
    <source>
    </source>
</evidence>
<evidence type="ECO:0000269" key="4">
    <source>
    </source>
</evidence>
<evidence type="ECO:0000269" key="5">
    <source>
    </source>
</evidence>
<evidence type="ECO:0000269" key="6">
    <source>
    </source>
</evidence>
<evidence type="ECO:0000305" key="7"/>
<sequence length="210" mass="24069">MVAKKRNTLRSKVSARNSQNFGPDVANNGILDESYDIESDPRAFLHQPKETKKEKLLNRQNTFLSNLKGKSTLNDGIAANFDGISKSSIRRRKRKLREELKPRMQDLLTSLEQEKDLRGIIENSSKDMNNDDDIDMDSKIRFVDTKEMNLKKIEPGSVRIKKNQPNIRNQKGAKALAANETARFNQVLTNQDFQKNPFGALREVIKLQKQ</sequence>